<name>ISOC2_BOVIN</name>
<accession>Q32KX0</accession>
<dbReference type="EMBL" id="BC109878">
    <property type="protein sequence ID" value="AAI09879.1"/>
    <property type="molecule type" value="mRNA"/>
</dbReference>
<dbReference type="RefSeq" id="NP_001033212.1">
    <property type="nucleotide sequence ID" value="NM_001038123.2"/>
</dbReference>
<dbReference type="SMR" id="Q32KX0"/>
<dbReference type="FunCoup" id="Q32KX0">
    <property type="interactions" value="783"/>
</dbReference>
<dbReference type="STRING" id="9913.ENSBTAP00000064229"/>
<dbReference type="PaxDb" id="9913-ENSBTAP00000021209"/>
<dbReference type="GeneID" id="516212"/>
<dbReference type="KEGG" id="bta:516212"/>
<dbReference type="CTD" id="79763"/>
<dbReference type="eggNOG" id="KOG4044">
    <property type="taxonomic scope" value="Eukaryota"/>
</dbReference>
<dbReference type="InParanoid" id="Q32KX0"/>
<dbReference type="OrthoDB" id="269496at2759"/>
<dbReference type="Proteomes" id="UP000009136">
    <property type="component" value="Unplaced"/>
</dbReference>
<dbReference type="GO" id="GO:0005737">
    <property type="term" value="C:cytoplasm"/>
    <property type="evidence" value="ECO:0000318"/>
    <property type="project" value="GO_Central"/>
</dbReference>
<dbReference type="GO" id="GO:0005634">
    <property type="term" value="C:nucleus"/>
    <property type="evidence" value="ECO:0007669"/>
    <property type="project" value="UniProtKB-SubCell"/>
</dbReference>
<dbReference type="CDD" id="cd01012">
    <property type="entry name" value="YcaC_related"/>
    <property type="match status" value="1"/>
</dbReference>
<dbReference type="FunFam" id="3.40.50.850:FF:000001">
    <property type="entry name" value="Isochorismatase domain-containing protein 1"/>
    <property type="match status" value="1"/>
</dbReference>
<dbReference type="Gene3D" id="3.40.50.850">
    <property type="entry name" value="Isochorismatase-like"/>
    <property type="match status" value="1"/>
</dbReference>
<dbReference type="InterPro" id="IPR000868">
    <property type="entry name" value="Isochorismatase-like_dom"/>
</dbReference>
<dbReference type="InterPro" id="IPR036380">
    <property type="entry name" value="Isochorismatase-like_sf"/>
</dbReference>
<dbReference type="InterPro" id="IPR050993">
    <property type="entry name" value="Isochorismatase_domain"/>
</dbReference>
<dbReference type="PANTHER" id="PTHR14119">
    <property type="entry name" value="HYDROLASE"/>
    <property type="match status" value="1"/>
</dbReference>
<dbReference type="PANTHER" id="PTHR14119:SF3">
    <property type="entry name" value="ISOCHORISMATASE DOMAIN-CONTAINING PROTEIN 2"/>
    <property type="match status" value="1"/>
</dbReference>
<dbReference type="Pfam" id="PF00857">
    <property type="entry name" value="Isochorismatase"/>
    <property type="match status" value="1"/>
</dbReference>
<dbReference type="SUPFAM" id="SSF52499">
    <property type="entry name" value="Isochorismatase-like hydrolases"/>
    <property type="match status" value="1"/>
</dbReference>
<reference key="1">
    <citation type="submission" date="2005-11" db="EMBL/GenBank/DDBJ databases">
        <authorList>
            <consortium name="NIH - Mammalian Gene Collection (MGC) project"/>
        </authorList>
    </citation>
    <scope>NUCLEOTIDE SEQUENCE [LARGE SCALE MRNA]</scope>
    <source>
        <strain>Crossbred X Angus</strain>
        <tissue>Liver</tissue>
    </source>
</reference>
<gene>
    <name type="primary">ISOC2</name>
</gene>
<evidence type="ECO:0000250" key="1"/>
<evidence type="ECO:0000305" key="2"/>
<organism>
    <name type="scientific">Bos taurus</name>
    <name type="common">Bovine</name>
    <dbReference type="NCBI Taxonomy" id="9913"/>
    <lineage>
        <taxon>Eukaryota</taxon>
        <taxon>Metazoa</taxon>
        <taxon>Chordata</taxon>
        <taxon>Craniata</taxon>
        <taxon>Vertebrata</taxon>
        <taxon>Euteleostomi</taxon>
        <taxon>Mammalia</taxon>
        <taxon>Eutheria</taxon>
        <taxon>Laurasiatheria</taxon>
        <taxon>Artiodactyla</taxon>
        <taxon>Ruminantia</taxon>
        <taxon>Pecora</taxon>
        <taxon>Bovidae</taxon>
        <taxon>Bovinae</taxon>
        <taxon>Bos</taxon>
    </lineage>
</organism>
<keyword id="KW-0963">Cytoplasm</keyword>
<keyword id="KW-0539">Nucleus</keyword>
<keyword id="KW-1185">Reference proteome</keyword>
<feature type="chain" id="PRO_0000268670" description="Isochorismatase domain-containing protein 2">
    <location>
        <begin position="1"/>
        <end position="204"/>
    </location>
</feature>
<protein>
    <recommendedName>
        <fullName>Isochorismatase domain-containing protein 2</fullName>
    </recommendedName>
</protein>
<sequence>MAAARPALGRVLPGSSMLFLCDMQEKFRHVVYFRQIVSMAARMLKVARLLSVPTVLTEQYPQGLGPTVPELGAQGLQPYSKTCFSMVPAVQQELDARPQLRSVLLCGVETQACILQTALDLLDRGLQVHVVVDACTSRSQVDRLVALSRLRQSGAFLSTSEGLIFQLVGDATHPQFKEIQKLVKEPSPDSGLLGLFQDQNPLFR</sequence>
<comment type="subunit">
    <text evidence="1">Interacts with CDKN2A.</text>
</comment>
<comment type="subcellular location">
    <subcellularLocation>
        <location evidence="1">Cytoplasm</location>
    </subcellularLocation>
    <subcellularLocation>
        <location evidence="1">Nucleus</location>
    </subcellularLocation>
    <text evidence="1">Localizes to the nucleus in the presence of CDKN2A.</text>
</comment>
<comment type="similarity">
    <text evidence="2">Belongs to the isochorismatase family.</text>
</comment>
<proteinExistence type="evidence at transcript level"/>